<feature type="chain" id="PRO_0000451973" description="Mesaconyl-CoA hydratase">
    <location>
        <begin position="1"/>
        <end position="358"/>
    </location>
</feature>
<keyword id="KW-0456">Lyase</keyword>
<accession>G0HQ35</accession>
<sequence length="358" mass="39909">MTDWTDPDALDLSDGETFDSLLDRADTREKGHFFEFFAEGDELAHDPGLRLSHHGSEQWMGQTLNHDPAYWRADTAQERGFEERPVHPDYLLACVMGITVEDLSEKGGYFLGRDDVEFHQPATAGTPLSVTSTVVDTRTSSSRPKYGIVTWETEGRDRETGETLVSYRRTNMIPRREPAATDGGAVGEQDEGGPAMPDTLLSPDGERFGDFQAALDTAREENAAVAYRHERGRTMDDQLVAGLPLSTLNTARQHHNRDEMADSPSGDIVAYGDVTRSIALAHARSDEATYREQRFADERFHDFVTLGDTVYGFTRVLDCDPDAGPERAGAVTFEHVAFNQEQTPVYSGRRTAHIQRHQ</sequence>
<reference key="1">
    <citation type="journal article" date="2011" name="J. Bacteriol.">
        <title>Complete genome sequence of Haloarcula hispanica, a model haloarchaeon for studying genetics, metabolism, and virus-host interaction.</title>
        <authorList>
            <person name="Liu H."/>
            <person name="Wu Z."/>
            <person name="Li M."/>
            <person name="Zhang F."/>
            <person name="Zheng H."/>
            <person name="Han J."/>
            <person name="Liu J."/>
            <person name="Zhou J."/>
            <person name="Wang S."/>
            <person name="Xiang H."/>
        </authorList>
    </citation>
    <scope>NUCLEOTIDE SEQUENCE [LARGE SCALE GENOMIC DNA]</scope>
    <source>
        <strain>ATCC 33960 / DSM 4426 / JCM 8911 / NBRC 102182 / NCIMB 2187 / VKM B-1755</strain>
    </source>
</reference>
<reference key="2">
    <citation type="journal article" date="2017" name="Front. Microbiol.">
        <title>Succinyl-CoA:mesaconate CoA-transferase and mesaconyl-CoA hydratase, enzymes of the methylaspartate cycle in Haloarcula hispanica.</title>
        <authorList>
            <person name="Borjian F."/>
            <person name="Johnsen U."/>
            <person name="Schoenheit P."/>
            <person name="Berg I.A."/>
        </authorList>
    </citation>
    <scope>FUNCTION</scope>
    <scope>CATALYTIC ACTIVITY</scope>
    <scope>ACTIVITY REGULATION</scope>
    <scope>BIOPHYSICOCHEMICAL PROPERTIES</scope>
    <scope>SUBUNIT</scope>
</reference>
<name>MCH_HALHT</name>
<comment type="function">
    <text evidence="1">Involved in the methylaspartate cycle. Catalyzes the reversible hydration of mesaconyl-CoA (2-methylfumaryl-CoA) to yield beta-methylmalyl-CoA ((2R,3S)-beta-methylmalyl-CoA) (PubMed:28932214). Also shows activity with mesaconyl-C4-CoA (3-methylfumaryl-CoA), (S)-citramalyl-CoA and (S)-malyl-CoA (PubMed:28932214).</text>
</comment>
<comment type="catalytic activity">
    <reaction evidence="1">
        <text>(2R,3S)-beta-methylmalyl-CoA = 2-methylfumaryl-CoA + H2O</text>
        <dbReference type="Rhea" id="RHEA:38263"/>
        <dbReference type="ChEBI" id="CHEBI:15377"/>
        <dbReference type="ChEBI" id="CHEBI:75634"/>
        <dbReference type="ChEBI" id="CHEBI:75635"/>
        <dbReference type="EC" id="4.2.1.148"/>
    </reaction>
    <physiologicalReaction direction="right-to-left" evidence="1">
        <dbReference type="Rhea" id="RHEA:38265"/>
    </physiologicalReaction>
</comment>
<comment type="activity regulation">
    <text evidence="1">Shows highest activity at 0.5 M KCl. Does not require divalent ions for activity.</text>
</comment>
<comment type="biophysicochemical properties">
    <kinetics>
        <KM evidence="1">1 mM for mesaconyl-CoA</KM>
        <KM evidence="1">0.35 mM for beta-methylmalyl-CoA</KM>
        <KM evidence="1">0.18 mM for mesaconyl-C4-CoA</KM>
        <KM evidence="1">2.6 mM for (S)-citramalyl-CoA</KM>
        <KM evidence="1">0.32 mM for (S)-malyl-CoA</KM>
        <Vmax evidence="1">20.7 umol/min/mg enzyme with mesaconyl-CoA as substrate</Vmax>
        <Vmax evidence="1">266.0 umol/min/mg enzyme with beta-methylmalyl-CoA as substrate</Vmax>
        <Vmax evidence="1">1.12 umol/min/mg enzyme with mesaconyl-C4-CoA as substrate</Vmax>
        <Vmax evidence="1">1.6 umol/min/mg enzyme with (S)-citramalyl-CoA as substrate</Vmax>
        <Vmax evidence="1">3.6 umol/min/mg enzyme with (S)-malyl-CoA as substrate</Vmax>
    </kinetics>
</comment>
<comment type="subunit">
    <text evidence="1">Homodimer.</text>
</comment>
<comment type="similarity">
    <text evidence="3">Belongs to the enoyl-CoA hydratase/isomerase family.</text>
</comment>
<dbReference type="EC" id="4.2.1.148"/>
<dbReference type="EMBL" id="CP002921">
    <property type="protein sequence ID" value="AEM56954.1"/>
    <property type="molecule type" value="Genomic_DNA"/>
</dbReference>
<dbReference type="RefSeq" id="WP_014040205.1">
    <property type="nucleotide sequence ID" value="NC_015948.1"/>
</dbReference>
<dbReference type="SMR" id="G0HQ35"/>
<dbReference type="STRING" id="634497.HAH_1340"/>
<dbReference type="GeneID" id="23804720"/>
<dbReference type="KEGG" id="hhi:HAH_1340"/>
<dbReference type="eggNOG" id="arCOG00774">
    <property type="taxonomic scope" value="Archaea"/>
</dbReference>
<dbReference type="eggNOG" id="arCOG00775">
    <property type="taxonomic scope" value="Archaea"/>
</dbReference>
<dbReference type="HOGENOM" id="CLU_777564_0_0_2"/>
<dbReference type="OrthoDB" id="299166at2157"/>
<dbReference type="BRENDA" id="4.2.1.148">
    <property type="organism ID" value="8340"/>
</dbReference>
<dbReference type="Proteomes" id="UP000005629">
    <property type="component" value="Chromosome I"/>
</dbReference>
<dbReference type="GO" id="GO:0016829">
    <property type="term" value="F:lyase activity"/>
    <property type="evidence" value="ECO:0007669"/>
    <property type="project" value="UniProtKB-KW"/>
</dbReference>
<dbReference type="CDD" id="cd03451">
    <property type="entry name" value="FkbR2"/>
    <property type="match status" value="1"/>
</dbReference>
<dbReference type="Gene3D" id="3.10.129.10">
    <property type="entry name" value="Hotdog Thioesterase"/>
    <property type="match status" value="1"/>
</dbReference>
<dbReference type="InterPro" id="IPR029069">
    <property type="entry name" value="HotDog_dom_sf"/>
</dbReference>
<dbReference type="InterPro" id="IPR048274">
    <property type="entry name" value="MC_hydratase"/>
</dbReference>
<dbReference type="InterPro" id="IPR045672">
    <property type="entry name" value="MC_hydratase_acr"/>
</dbReference>
<dbReference type="InterPro" id="IPR052342">
    <property type="entry name" value="MCH/BMMD"/>
</dbReference>
<dbReference type="NCBIfam" id="NF041625">
    <property type="entry name" value="methfumCoahyd_Halo"/>
    <property type="match status" value="1"/>
</dbReference>
<dbReference type="PANTHER" id="PTHR43664:SF1">
    <property type="entry name" value="BETA-METHYLMALYL-COA DEHYDRATASE"/>
    <property type="match status" value="1"/>
</dbReference>
<dbReference type="PANTHER" id="PTHR43664">
    <property type="entry name" value="MONOAMINE OXIDASE-RELATED"/>
    <property type="match status" value="1"/>
</dbReference>
<dbReference type="Pfam" id="PF19315">
    <property type="entry name" value="MC_hydratase"/>
    <property type="match status" value="1"/>
</dbReference>
<dbReference type="SUPFAM" id="SSF54637">
    <property type="entry name" value="Thioesterase/thiol ester dehydrase-isomerase"/>
    <property type="match status" value="2"/>
</dbReference>
<organism>
    <name type="scientific">Haloarcula hispanica (strain ATCC 33960 / DSM 4426 / JCM 8911 / NBRC 102182 / NCIMB 2187 / VKM B-1755)</name>
    <dbReference type="NCBI Taxonomy" id="634497"/>
    <lineage>
        <taxon>Archaea</taxon>
        <taxon>Methanobacteriati</taxon>
        <taxon>Methanobacteriota</taxon>
        <taxon>Stenosarchaea group</taxon>
        <taxon>Halobacteria</taxon>
        <taxon>Halobacteriales</taxon>
        <taxon>Haloarculaceae</taxon>
        <taxon>Haloarcula</taxon>
    </lineage>
</organism>
<proteinExistence type="evidence at protein level"/>
<protein>
    <recommendedName>
        <fullName evidence="2">Mesaconyl-CoA hydratase</fullName>
        <ecNumber>4.2.1.148</ecNumber>
    </recommendedName>
</protein>
<evidence type="ECO:0000269" key="1">
    <source>
    </source>
</evidence>
<evidence type="ECO:0000303" key="2">
    <source>
    </source>
</evidence>
<evidence type="ECO:0000305" key="3"/>
<evidence type="ECO:0000312" key="4">
    <source>
        <dbReference type="EMBL" id="AEM56954.1"/>
    </source>
</evidence>
<gene>
    <name evidence="2" type="primary">mch</name>
    <name evidence="4" type="ordered locus">HAH_1340</name>
</gene>